<proteinExistence type="evidence at protein level"/>
<gene>
    <name type="primary">LYZ</name>
</gene>
<comment type="function">
    <text>Lysozymes have primarily a bacteriolytic function; those in tissues and body fluids are associated with the monocyte-macrophage system and enhance the activity of immunoagents.</text>
</comment>
<comment type="catalytic activity">
    <reaction>
        <text>Hydrolysis of (1-&gt;4)-beta-linkages between N-acetylmuramic acid and N-acetyl-D-glucosamine residues in a peptidoglycan and between N-acetyl-D-glucosamine residues in chitodextrins.</text>
        <dbReference type="EC" id="3.2.1.17"/>
    </reaction>
</comment>
<comment type="cofactor">
    <cofactor evidence="3">
        <name>Ca(2+)</name>
        <dbReference type="ChEBI" id="CHEBI:29108"/>
    </cofactor>
    <text evidence="3">Binds 1 Ca(2+) ion per subunit.</text>
</comment>
<comment type="subunit">
    <text>Monomer.</text>
</comment>
<comment type="miscellaneous">
    <text>Lysozyme C is capable of both hydrolysis and transglycosylation; it also shows a slight esterase activity. It acts rapidly on both peptide-substituted and unsubstituted peptidoglycan, and slowly on chitin oligosaccharides.</text>
</comment>
<comment type="similarity">
    <text evidence="2">Belongs to the glycosyl hydrolase 22 family.</text>
</comment>
<keyword id="KW-0002">3D-structure</keyword>
<keyword id="KW-0929">Antimicrobial</keyword>
<keyword id="KW-0081">Bacteriolytic enzyme</keyword>
<keyword id="KW-0106">Calcium</keyword>
<keyword id="KW-0903">Direct protein sequencing</keyword>
<keyword id="KW-1015">Disulfide bond</keyword>
<keyword id="KW-0326">Glycosidase</keyword>
<keyword id="KW-0378">Hydrolase</keyword>
<keyword id="KW-0479">Metal-binding</keyword>
<keyword id="KW-0494">Milk protein</keyword>
<keyword id="KW-1185">Reference proteome</keyword>
<sequence length="129" mass="14688">KVFSKCELAHKLKAQEMDGFGGYSLANWVCMAEYESNFNTRAFNGKNANGSYDYGLFQLNSKWWCKDNKRSSSNACNIMCSKLLDDNIDDDISCAKRVVRDPKGMSAWKAWVKHCKDKDLSEYLASCNL</sequence>
<protein>
    <recommendedName>
        <fullName>Lysozyme C</fullName>
        <ecNumber>3.2.1.17</ecNumber>
    </recommendedName>
    <alternativeName>
        <fullName>1,4-beta-N-acetylmuramidase C</fullName>
    </alternativeName>
</protein>
<dbReference type="EC" id="3.2.1.17"/>
<dbReference type="PIR" id="S01661">
    <property type="entry name" value="S01661"/>
</dbReference>
<dbReference type="PDB" id="5XUW">
    <property type="method" value="X-ray"/>
    <property type="resolution" value="1.76 A"/>
    <property type="chains" value="A/B=1-129"/>
</dbReference>
<dbReference type="PDBsum" id="5XUW"/>
<dbReference type="SMR" id="P11375"/>
<dbReference type="Allergome" id="12071">
    <property type="allergen name" value="Equ as 6"/>
</dbReference>
<dbReference type="CAZy" id="GH22">
    <property type="family name" value="Glycoside Hydrolase Family 22"/>
</dbReference>
<dbReference type="Proteomes" id="UP000694387">
    <property type="component" value="Unplaced"/>
</dbReference>
<dbReference type="GO" id="GO:0003796">
    <property type="term" value="F:lysozyme activity"/>
    <property type="evidence" value="ECO:0007669"/>
    <property type="project" value="UniProtKB-EC"/>
</dbReference>
<dbReference type="GO" id="GO:0046872">
    <property type="term" value="F:metal ion binding"/>
    <property type="evidence" value="ECO:0007669"/>
    <property type="project" value="UniProtKB-KW"/>
</dbReference>
<dbReference type="GO" id="GO:0042742">
    <property type="term" value="P:defense response to bacterium"/>
    <property type="evidence" value="ECO:0007669"/>
    <property type="project" value="UniProtKB-KW"/>
</dbReference>
<dbReference type="GO" id="GO:0031640">
    <property type="term" value="P:killing of cells of another organism"/>
    <property type="evidence" value="ECO:0007669"/>
    <property type="project" value="UniProtKB-KW"/>
</dbReference>
<dbReference type="CDD" id="cd16897">
    <property type="entry name" value="LYZ_C"/>
    <property type="match status" value="1"/>
</dbReference>
<dbReference type="FunFam" id="1.10.530.10:FF:000001">
    <property type="entry name" value="Lysozyme C"/>
    <property type="match status" value="1"/>
</dbReference>
<dbReference type="Gene3D" id="1.10.530.10">
    <property type="match status" value="1"/>
</dbReference>
<dbReference type="InterPro" id="IPR001916">
    <property type="entry name" value="Glyco_hydro_22"/>
</dbReference>
<dbReference type="InterPro" id="IPR019799">
    <property type="entry name" value="Glyco_hydro_22_CS"/>
</dbReference>
<dbReference type="InterPro" id="IPR000974">
    <property type="entry name" value="Glyco_hydro_22_lys"/>
</dbReference>
<dbReference type="InterPro" id="IPR023346">
    <property type="entry name" value="Lysozyme-like_dom_sf"/>
</dbReference>
<dbReference type="PANTHER" id="PTHR11407">
    <property type="entry name" value="LYSOZYME C"/>
    <property type="match status" value="1"/>
</dbReference>
<dbReference type="PANTHER" id="PTHR11407:SF69">
    <property type="entry name" value="LYSOZYME C, MILK ISOZYME"/>
    <property type="match status" value="1"/>
</dbReference>
<dbReference type="Pfam" id="PF00062">
    <property type="entry name" value="Lys"/>
    <property type="match status" value="1"/>
</dbReference>
<dbReference type="PRINTS" id="PR00137">
    <property type="entry name" value="LYSOZYME"/>
</dbReference>
<dbReference type="PRINTS" id="PR00135">
    <property type="entry name" value="LYZLACT"/>
</dbReference>
<dbReference type="SMART" id="SM00263">
    <property type="entry name" value="LYZ1"/>
    <property type="match status" value="1"/>
</dbReference>
<dbReference type="SUPFAM" id="SSF53955">
    <property type="entry name" value="Lysozyme-like"/>
    <property type="match status" value="1"/>
</dbReference>
<dbReference type="PROSITE" id="PS00128">
    <property type="entry name" value="GLYCOSYL_HYDROL_F22_1"/>
    <property type="match status" value="1"/>
</dbReference>
<dbReference type="PROSITE" id="PS51348">
    <property type="entry name" value="GLYCOSYL_HYDROL_F22_2"/>
    <property type="match status" value="1"/>
</dbReference>
<accession>P11375</accession>
<name>LYSC_EQUAS</name>
<feature type="chain" id="PRO_0000208849" description="Lysozyme C">
    <location>
        <begin position="1"/>
        <end position="129"/>
    </location>
</feature>
<feature type="domain" description="C-type lysozyme" evidence="2">
    <location>
        <begin position="1"/>
        <end position="129"/>
    </location>
</feature>
<feature type="active site" evidence="2">
    <location>
        <position position="35"/>
    </location>
</feature>
<feature type="active site" evidence="2">
    <location>
        <position position="53"/>
    </location>
</feature>
<feature type="binding site" evidence="1">
    <location>
        <position position="82"/>
    </location>
    <ligand>
        <name>Ca(2+)</name>
        <dbReference type="ChEBI" id="CHEBI:29108"/>
    </ligand>
</feature>
<feature type="binding site" evidence="1">
    <location>
        <position position="85"/>
    </location>
    <ligand>
        <name>Ca(2+)</name>
        <dbReference type="ChEBI" id="CHEBI:29108"/>
    </ligand>
</feature>
<feature type="binding site" evidence="1">
    <location>
        <position position="87"/>
    </location>
    <ligand>
        <name>Ca(2+)</name>
        <dbReference type="ChEBI" id="CHEBI:29108"/>
    </ligand>
</feature>
<feature type="binding site" evidence="1">
    <location>
        <position position="90"/>
    </location>
    <ligand>
        <name>Ca(2+)</name>
        <dbReference type="ChEBI" id="CHEBI:29108"/>
    </ligand>
</feature>
<feature type="binding site" evidence="1">
    <location>
        <position position="91"/>
    </location>
    <ligand>
        <name>Ca(2+)</name>
        <dbReference type="ChEBI" id="CHEBI:29108"/>
    </ligand>
</feature>
<feature type="disulfide bond" evidence="2">
    <location>
        <begin position="6"/>
        <end position="127"/>
    </location>
</feature>
<feature type="disulfide bond" evidence="2">
    <location>
        <begin position="30"/>
        <end position="115"/>
    </location>
</feature>
<feature type="disulfide bond" evidence="2">
    <location>
        <begin position="65"/>
        <end position="80"/>
    </location>
</feature>
<feature type="disulfide bond" evidence="2">
    <location>
        <begin position="76"/>
        <end position="94"/>
    </location>
</feature>
<feature type="helix" evidence="4">
    <location>
        <begin position="5"/>
        <end position="14"/>
    </location>
</feature>
<feature type="helix" evidence="4">
    <location>
        <begin position="20"/>
        <end position="22"/>
    </location>
</feature>
<feature type="helix" evidence="4">
    <location>
        <begin position="25"/>
        <end position="36"/>
    </location>
</feature>
<feature type="strand" evidence="4">
    <location>
        <begin position="43"/>
        <end position="46"/>
    </location>
</feature>
<feature type="strand" evidence="4">
    <location>
        <begin position="48"/>
        <end position="50"/>
    </location>
</feature>
<feature type="turn" evidence="4">
    <location>
        <begin position="55"/>
        <end position="58"/>
    </location>
</feature>
<feature type="turn" evidence="4">
    <location>
        <begin position="61"/>
        <end position="64"/>
    </location>
</feature>
<feature type="helix" evidence="4">
    <location>
        <begin position="80"/>
        <end position="83"/>
    </location>
</feature>
<feature type="strand" evidence="4">
    <location>
        <begin position="84"/>
        <end position="86"/>
    </location>
</feature>
<feature type="helix" evidence="4">
    <location>
        <begin position="89"/>
        <end position="100"/>
    </location>
</feature>
<feature type="helix" evidence="4">
    <location>
        <begin position="104"/>
        <end position="107"/>
    </location>
</feature>
<feature type="helix" evidence="4">
    <location>
        <begin position="109"/>
        <end position="114"/>
    </location>
</feature>
<feature type="turn" evidence="4">
    <location>
        <begin position="115"/>
        <end position="117"/>
    </location>
</feature>
<feature type="turn" evidence="4">
    <location>
        <begin position="121"/>
        <end position="124"/>
    </location>
</feature>
<feature type="helix" evidence="4">
    <location>
        <begin position="125"/>
        <end position="127"/>
    </location>
</feature>
<evidence type="ECO:0000250" key="1">
    <source>
        <dbReference type="UniProtKB" id="P81708"/>
    </source>
</evidence>
<evidence type="ECO:0000255" key="2">
    <source>
        <dbReference type="PROSITE-ProRule" id="PRU00680"/>
    </source>
</evidence>
<evidence type="ECO:0000305" key="3"/>
<evidence type="ECO:0007829" key="4">
    <source>
        <dbReference type="PDB" id="5XUW"/>
    </source>
</evidence>
<reference key="1">
    <citation type="journal article" date="1988" name="Biol. Chem. Hoppe-Seyler">
        <title>The primary structure of donkey (Equus asinus) lysozyme contains the Ca(II) binding site of alpha-lactalbumin.</title>
        <authorList>
            <person name="Godovac-Zimmermann J."/>
            <person name="Conti A."/>
            <person name="Napolitano L."/>
        </authorList>
    </citation>
    <scope>PROTEIN SEQUENCE</scope>
</reference>
<organism>
    <name type="scientific">Equus asinus</name>
    <name type="common">Donkey</name>
    <name type="synonym">Equus africanus asinus</name>
    <dbReference type="NCBI Taxonomy" id="9793"/>
    <lineage>
        <taxon>Eukaryota</taxon>
        <taxon>Metazoa</taxon>
        <taxon>Chordata</taxon>
        <taxon>Craniata</taxon>
        <taxon>Vertebrata</taxon>
        <taxon>Euteleostomi</taxon>
        <taxon>Mammalia</taxon>
        <taxon>Eutheria</taxon>
        <taxon>Laurasiatheria</taxon>
        <taxon>Perissodactyla</taxon>
        <taxon>Equidae</taxon>
        <taxon>Equus</taxon>
    </lineage>
</organism>